<reference key="1">
    <citation type="journal article" date="1993" name="Development">
        <title>The murine cripto gene: expression during mesoderm induction and early heart morphogenesis.</title>
        <authorList>
            <person name="Dono R."/>
            <person name="Scalera L."/>
            <person name="Pacifico F."/>
            <person name="Acampora D."/>
            <person name="Persico M.G."/>
            <person name="Simeone A."/>
        </authorList>
    </citation>
    <scope>NUCLEOTIDE SEQUENCE [MRNA]</scope>
    <source>
        <strain>C57BL/6J</strain>
        <tissue>Embryo</tissue>
    </source>
</reference>
<reference key="2">
    <citation type="journal article" date="1996" name="Mamm. Genome">
        <title>Characterization of the mouse Tdgf1 gene and Tdgf pseudogenes.</title>
        <authorList>
            <person name="Liguori G."/>
            <person name="Tucci M."/>
            <person name="Montuori N."/>
            <person name="Dono R."/>
            <person name="Lago C.T."/>
            <person name="Pacifico A.F."/>
            <person name="Persico M.G."/>
        </authorList>
    </citation>
    <scope>NUCLEOTIDE SEQUENCE [GENOMIC DNA] OF 135-171</scope>
    <source>
        <strain>129/Sv</strain>
    </source>
</reference>
<reference key="3">
    <citation type="journal article" date="2009" name="PLoS Biol.">
        <title>Lineage-specific biology revealed by a finished genome assembly of the mouse.</title>
        <authorList>
            <person name="Church D.M."/>
            <person name="Goodstadt L."/>
            <person name="Hillier L.W."/>
            <person name="Zody M.C."/>
            <person name="Goldstein S."/>
            <person name="She X."/>
            <person name="Bult C.J."/>
            <person name="Agarwala R."/>
            <person name="Cherry J.L."/>
            <person name="DiCuccio M."/>
            <person name="Hlavina W."/>
            <person name="Kapustin Y."/>
            <person name="Meric P."/>
            <person name="Maglott D."/>
            <person name="Birtle Z."/>
            <person name="Marques A.C."/>
            <person name="Graves T."/>
            <person name="Zhou S."/>
            <person name="Teague B."/>
            <person name="Potamousis K."/>
            <person name="Churas C."/>
            <person name="Place M."/>
            <person name="Herschleb J."/>
            <person name="Runnheim R."/>
            <person name="Forrest D."/>
            <person name="Amos-Landgraf J."/>
            <person name="Schwartz D.C."/>
            <person name="Cheng Z."/>
            <person name="Lindblad-Toh K."/>
            <person name="Eichler E.E."/>
            <person name="Ponting C.P."/>
        </authorList>
    </citation>
    <scope>NUCLEOTIDE SEQUENCE [LARGE SCALE GENOMIC DNA]</scope>
    <source>
        <strain>C57BL/6J</strain>
    </source>
</reference>
<reference key="4">
    <citation type="journal article" date="2004" name="Genome Res.">
        <title>The status, quality, and expansion of the NIH full-length cDNA project: the Mammalian Gene Collection (MGC).</title>
        <authorList>
            <consortium name="The MGC Project Team"/>
        </authorList>
    </citation>
    <scope>NUCLEOTIDE SEQUENCE [LARGE SCALE MRNA]</scope>
    <source>
        <strain>C57BL/6J</strain>
        <tissue>Blastocyst</tissue>
    </source>
</reference>
<reference key="5">
    <citation type="journal article" date="2000" name="Mech. Dev.">
        <title>Membrane-anchorage of Cripto protein by glycosylphosphatidylinositol and its distribution during early mouse development.</title>
        <authorList>
            <person name="Minchiotti G."/>
            <person name="Parisi S."/>
            <person name="Liguori G."/>
            <person name="Signore M."/>
            <person name="Lania G."/>
            <person name="Adamson E.D."/>
            <person name="Lago C.T."/>
            <person name="Persico M.G."/>
        </authorList>
    </citation>
    <scope>SUBCELLULAR LOCATION</scope>
    <scope>GPI-ANCHOR</scope>
</reference>
<reference key="6">
    <citation type="journal article" date="2006" name="J. Med. Chem.">
        <title>Solution structure of mouse Cripto CFC domain and its inactive variant Trp107Ala.</title>
        <authorList>
            <person name="Calvanese L."/>
            <person name="Saporito A."/>
            <person name="Marasco D."/>
            <person name="D'Auria G."/>
            <person name="Minchiotti G."/>
            <person name="Pedone C."/>
            <person name="Paolillo L."/>
            <person name="Falcigno L."/>
            <person name="Ruvo M."/>
        </authorList>
    </citation>
    <scope>STRUCTURE BY NMR OF 96-134</scope>
    <scope>DISULFIDE BONDS</scope>
    <scope>MUTAGENESIS OF TRP-107</scope>
</reference>
<organism>
    <name type="scientific">Mus musculus</name>
    <name type="common">Mouse</name>
    <dbReference type="NCBI Taxonomy" id="10090"/>
    <lineage>
        <taxon>Eukaryota</taxon>
        <taxon>Metazoa</taxon>
        <taxon>Chordata</taxon>
        <taxon>Craniata</taxon>
        <taxon>Vertebrata</taxon>
        <taxon>Euteleostomi</taxon>
        <taxon>Mammalia</taxon>
        <taxon>Eutheria</taxon>
        <taxon>Euarchontoglires</taxon>
        <taxon>Glires</taxon>
        <taxon>Rodentia</taxon>
        <taxon>Myomorpha</taxon>
        <taxon>Muroidea</taxon>
        <taxon>Muridae</taxon>
        <taxon>Murinae</taxon>
        <taxon>Mus</taxon>
        <taxon>Mus</taxon>
    </lineage>
</organism>
<keyword id="KW-0002">3D-structure</keyword>
<keyword id="KW-1003">Cell membrane</keyword>
<keyword id="KW-1015">Disulfide bond</keyword>
<keyword id="KW-0245">EGF-like domain</keyword>
<keyword id="KW-0325">Glycoprotein</keyword>
<keyword id="KW-0336">GPI-anchor</keyword>
<keyword id="KW-0339">Growth factor</keyword>
<keyword id="KW-0449">Lipoprotein</keyword>
<keyword id="KW-0472">Membrane</keyword>
<keyword id="KW-1185">Reference proteome</keyword>
<keyword id="KW-0964">Secreted</keyword>
<keyword id="KW-0732">Signal</keyword>
<protein>
    <recommendedName>
        <fullName>Teratocarcinoma-derived growth factor</fullName>
    </recommendedName>
    <alternativeName>
        <fullName>Cripto growth factor</fullName>
    </alternativeName>
    <alternativeName>
        <fullName>Epidermal growth factor-like Cripto protein</fullName>
    </alternativeName>
</protein>
<gene>
    <name type="primary">Cripto</name>
    <name type="synonym">Tdgf1</name>
</gene>
<accession>P51865</accession>
<accession>Q7TQ06</accession>
<evidence type="ECO:0000250" key="1"/>
<evidence type="ECO:0000250" key="2">
    <source>
        <dbReference type="UniProtKB" id="P13385"/>
    </source>
</evidence>
<evidence type="ECO:0000255" key="3"/>
<evidence type="ECO:0000255" key="4">
    <source>
        <dbReference type="PROSITE-ProRule" id="PRU00076"/>
    </source>
</evidence>
<evidence type="ECO:0000269" key="5">
    <source>
    </source>
</evidence>
<evidence type="ECO:0000269" key="6">
    <source>
    </source>
</evidence>
<evidence type="ECO:0000305" key="7"/>
<evidence type="ECO:0007829" key="8">
    <source>
        <dbReference type="PDB" id="2J5H"/>
    </source>
</evidence>
<feature type="signal peptide" evidence="3">
    <location>
        <begin position="1"/>
        <end position="17"/>
    </location>
</feature>
<feature type="chain" id="PRO_0000007504" description="Teratocarcinoma-derived growth factor">
    <location>
        <begin position="18"/>
        <end position="134"/>
    </location>
</feature>
<feature type="propeptide" id="PRO_0000395411" description="Removed in mature form" evidence="1">
    <location>
        <begin position="135"/>
        <end position="171"/>
    </location>
</feature>
<feature type="domain" description="EGF-like" evidence="4">
    <location>
        <begin position="62"/>
        <end position="91"/>
    </location>
</feature>
<feature type="lipid moiety-binding region" description="GPI-anchor amidated aspartate" evidence="1">
    <location>
        <position position="134"/>
    </location>
</feature>
<feature type="glycosylation site" description="N-linked (GlcNAc...) asparagine" evidence="3">
    <location>
        <position position="63"/>
    </location>
</feature>
<feature type="disulfide bond" evidence="4">
    <location>
        <begin position="66"/>
        <end position="73"/>
    </location>
</feature>
<feature type="disulfide bond" evidence="4">
    <location>
        <begin position="67"/>
        <end position="79"/>
    </location>
</feature>
<feature type="disulfide bond" evidence="4">
    <location>
        <begin position="81"/>
        <end position="90"/>
    </location>
</feature>
<feature type="disulfide bond" evidence="4 6">
    <location>
        <begin position="99"/>
        <end position="117"/>
    </location>
</feature>
<feature type="disulfide bond" evidence="4 6">
    <location>
        <begin position="112"/>
        <end position="133"/>
    </location>
</feature>
<feature type="disulfide bond" evidence="4 6">
    <location>
        <begin position="115"/>
        <end position="124"/>
    </location>
</feature>
<feature type="mutagenesis site" description="Unable to bind Cripto receptor." evidence="6">
    <original>W</original>
    <variation>A</variation>
    <location>
        <position position="107"/>
    </location>
</feature>
<feature type="sequence conflict" description="In Ref. 1; AAA37459 and 2; CAA63827." evidence="7" ref="1 2">
    <original>G</original>
    <variation>R</variation>
    <location>
        <position position="146"/>
    </location>
</feature>
<feature type="strand" evidence="8">
    <location>
        <begin position="119"/>
        <end position="121"/>
    </location>
</feature>
<feature type="strand" evidence="8">
    <location>
        <begin position="127"/>
        <end position="130"/>
    </location>
</feature>
<proteinExistence type="evidence at protein level"/>
<comment type="function">
    <text evidence="2">GPI-anchored cell membrane protein involved in Nodal signaling. Cell-associated CRIPTO acts as a Nodal coreceptor in cis. Shedding of CRIPTO by Tmem8a modulates Nodal signaling by allowing soluble CRIPTO to act as a Nodal coreceptor on other cells. Could play a role in the determination of the epiblastic cells that subsequently give rise to the mesoderm.</text>
</comment>
<comment type="subunit">
    <text evidence="1">Interacts with the activin type-1 receptor ACVR1B.</text>
</comment>
<comment type="interaction">
    <interactant intactId="EBI-15529529">
        <id>P51865</id>
    </interactant>
    <interactant intactId="EBI-42477704">
        <id>Q9PW55</id>
        <label>lft1</label>
    </interactant>
    <organismsDiffer>true</organismsDiffer>
    <experiments>2</experiments>
</comment>
<comment type="interaction">
    <interactant intactId="EBI-15529529">
        <id>P51865</id>
    </interactant>
    <interactant intactId="EBI-15529595">
        <id>O13144</id>
        <label>ndr1</label>
    </interactant>
    <organismsDiffer>true</organismsDiffer>
    <experiments>2</experiments>
</comment>
<comment type="subcellular location">
    <subcellularLocation>
        <location evidence="5">Cell membrane</location>
        <topology evidence="5">Lipid-anchor</topology>
        <topology evidence="5">GPI-anchor</topology>
    </subcellularLocation>
    <subcellularLocation>
        <location evidence="2">Secreted</location>
    </subcellularLocation>
    <text evidence="2">Released from the cell membrane by GPI cleavage.</text>
</comment>
<comment type="tissue specificity">
    <text>Expressed at low level in specific organs of the adult animal such as spleen, heart, lung and brain. During gastrulation, expressed in the forming mesoderm. In later stages of the developing heart, expression is restricted to the truncus arteriosus.</text>
</comment>
<comment type="developmental stage">
    <text>First expressed prior to the onset of gastrulation (early streak stage), then continues throughout embryonic development.</text>
</comment>
<comment type="PTM">
    <text evidence="2">The GPI-anchor is attached to the protein in the endoplasmic reticulum and serves to target the protein to the cell surface. There, it is processed by GPI processing phospholipase A2 (Tmem8a), removing an acyl-chain at the sn-2 position of GPI and releasing CRIPTO as a lysophosphatidylinositol-bearing form, which is further cleaved by phospholipase D (Gpld1) into a soluble form.</text>
</comment>
<comment type="similarity">
    <text evidence="7">Belongs to the EGF-CFC (Cripto-1/FRL1/Cryptic) family.</text>
</comment>
<dbReference type="EMBL" id="M87321">
    <property type="protein sequence ID" value="AAA37459.1"/>
    <property type="molecule type" value="mRNA"/>
</dbReference>
<dbReference type="EMBL" id="X94083">
    <property type="protein sequence ID" value="CAA63827.1"/>
    <property type="molecule type" value="Genomic_DNA"/>
</dbReference>
<dbReference type="EMBL" id="AC118727">
    <property type="status" value="NOT_ANNOTATED_CDS"/>
    <property type="molecule type" value="Genomic_DNA"/>
</dbReference>
<dbReference type="EMBL" id="BC052646">
    <property type="protein sequence ID" value="AAH52646.1"/>
    <property type="molecule type" value="mRNA"/>
</dbReference>
<dbReference type="CCDS" id="CCDS40783.1"/>
<dbReference type="PIR" id="I49612">
    <property type="entry name" value="I49612"/>
</dbReference>
<dbReference type="RefSeq" id="NP_035692.2">
    <property type="nucleotide sequence ID" value="NM_011562.2"/>
</dbReference>
<dbReference type="PDB" id="2J5H">
    <property type="method" value="NMR"/>
    <property type="chains" value="A=96-134"/>
</dbReference>
<dbReference type="PDBsum" id="2J5H"/>
<dbReference type="BMRB" id="P51865"/>
<dbReference type="SMR" id="P51865"/>
<dbReference type="DIP" id="DIP-46063N"/>
<dbReference type="FunCoup" id="P51865">
    <property type="interactions" value="88"/>
</dbReference>
<dbReference type="IntAct" id="P51865">
    <property type="interactions" value="4"/>
</dbReference>
<dbReference type="STRING" id="10090.ENSMUSP00000035075"/>
<dbReference type="GlyCosmos" id="P51865">
    <property type="glycosylation" value="1 site, No reported glycans"/>
</dbReference>
<dbReference type="GlyGen" id="P51865">
    <property type="glycosylation" value="2 sites"/>
</dbReference>
<dbReference type="PaxDb" id="10090-ENSMUSP00000035075"/>
<dbReference type="Antibodypedia" id="35134">
    <property type="antibodies" value="646 antibodies from 38 providers"/>
</dbReference>
<dbReference type="DNASU" id="21667"/>
<dbReference type="Ensembl" id="ENSMUST00000035075.13">
    <property type="protein sequence ID" value="ENSMUSP00000035075.9"/>
    <property type="gene ID" value="ENSMUSG00000032494.13"/>
</dbReference>
<dbReference type="GeneID" id="21667"/>
<dbReference type="KEGG" id="mmu:21667"/>
<dbReference type="AGR" id="MGI:98658"/>
<dbReference type="CTD" id="6997"/>
<dbReference type="MGI" id="MGI:98658">
    <property type="gene designation" value="Cripto"/>
</dbReference>
<dbReference type="VEuPathDB" id="HostDB:ENSMUSG00000032494"/>
<dbReference type="eggNOG" id="KOG1217">
    <property type="taxonomic scope" value="Eukaryota"/>
</dbReference>
<dbReference type="GeneTree" id="ENSGT00940000159076"/>
<dbReference type="HOGENOM" id="CLU_125037_0_0_1"/>
<dbReference type="InParanoid" id="P51865"/>
<dbReference type="OMA" id="MCKCWRG"/>
<dbReference type="OrthoDB" id="9893603at2759"/>
<dbReference type="PhylomeDB" id="P51865"/>
<dbReference type="TreeFam" id="TF333187"/>
<dbReference type="BioGRID-ORCS" id="21667">
    <property type="hits" value="3 hits in 76 CRISPR screens"/>
</dbReference>
<dbReference type="EvolutionaryTrace" id="P51865"/>
<dbReference type="PRO" id="PR:P51865"/>
<dbReference type="Proteomes" id="UP000000589">
    <property type="component" value="Chromosome 9"/>
</dbReference>
<dbReference type="RNAct" id="P51865">
    <property type="molecule type" value="protein"/>
</dbReference>
<dbReference type="Bgee" id="ENSMUSG00000032494">
    <property type="expression patterns" value="Expressed in superior surface of tongue and 65 other cell types or tissues"/>
</dbReference>
<dbReference type="GO" id="GO:0009986">
    <property type="term" value="C:cell surface"/>
    <property type="evidence" value="ECO:0000314"/>
    <property type="project" value="MGI"/>
</dbReference>
<dbReference type="GO" id="GO:0005737">
    <property type="term" value="C:cytoplasm"/>
    <property type="evidence" value="ECO:0000314"/>
    <property type="project" value="MGI"/>
</dbReference>
<dbReference type="GO" id="GO:0005576">
    <property type="term" value="C:extracellular region"/>
    <property type="evidence" value="ECO:0000314"/>
    <property type="project" value="UniProtKB"/>
</dbReference>
<dbReference type="GO" id="GO:0005615">
    <property type="term" value="C:extracellular space"/>
    <property type="evidence" value="ECO:0000314"/>
    <property type="project" value="MGI"/>
</dbReference>
<dbReference type="GO" id="GO:0005794">
    <property type="term" value="C:Golgi apparatus"/>
    <property type="evidence" value="ECO:0000314"/>
    <property type="project" value="MGI"/>
</dbReference>
<dbReference type="GO" id="GO:0005634">
    <property type="term" value="C:nucleus"/>
    <property type="evidence" value="ECO:0000314"/>
    <property type="project" value="MGI"/>
</dbReference>
<dbReference type="GO" id="GO:0048471">
    <property type="term" value="C:perinuclear region of cytoplasm"/>
    <property type="evidence" value="ECO:0000314"/>
    <property type="project" value="MGI"/>
</dbReference>
<dbReference type="GO" id="GO:0005886">
    <property type="term" value="C:plasma membrane"/>
    <property type="evidence" value="ECO:0000314"/>
    <property type="project" value="MGI"/>
</dbReference>
<dbReference type="GO" id="GO:0098552">
    <property type="term" value="C:side of membrane"/>
    <property type="evidence" value="ECO:0007669"/>
    <property type="project" value="UniProtKB-KW"/>
</dbReference>
<dbReference type="GO" id="GO:0015026">
    <property type="term" value="F:coreceptor activity"/>
    <property type="evidence" value="ECO:0000314"/>
    <property type="project" value="UniProtKB"/>
</dbReference>
<dbReference type="GO" id="GO:0008083">
    <property type="term" value="F:growth factor activity"/>
    <property type="evidence" value="ECO:0000266"/>
    <property type="project" value="MGI"/>
</dbReference>
<dbReference type="GO" id="GO:0038100">
    <property type="term" value="F:nodal binding"/>
    <property type="evidence" value="ECO:0000353"/>
    <property type="project" value="UniProtKB"/>
</dbReference>
<dbReference type="GO" id="GO:0070698">
    <property type="term" value="F:type I activin receptor binding"/>
    <property type="evidence" value="ECO:0000353"/>
    <property type="project" value="UniProtKB"/>
</dbReference>
<dbReference type="GO" id="GO:0017147">
    <property type="term" value="F:Wnt-protein binding"/>
    <property type="evidence" value="ECO:0000353"/>
    <property type="project" value="UniProtKB"/>
</dbReference>
<dbReference type="GO" id="GO:0009948">
    <property type="term" value="P:anterior/posterior axis specification"/>
    <property type="evidence" value="ECO:0000316"/>
    <property type="project" value="MGI"/>
</dbReference>
<dbReference type="GO" id="GO:0008595">
    <property type="term" value="P:anterior/posterior axis specification, embryo"/>
    <property type="evidence" value="ECO:0000315"/>
    <property type="project" value="MGI"/>
</dbReference>
<dbReference type="GO" id="GO:0055007">
    <property type="term" value="P:cardiac muscle cell differentiation"/>
    <property type="evidence" value="ECO:0000315"/>
    <property type="project" value="MGI"/>
</dbReference>
<dbReference type="GO" id="GO:0030154">
    <property type="term" value="P:cell differentiation"/>
    <property type="evidence" value="ECO:0000304"/>
    <property type="project" value="UniProtKB"/>
</dbReference>
<dbReference type="GO" id="GO:0048144">
    <property type="term" value="P:fibroblast proliferation"/>
    <property type="evidence" value="ECO:0000315"/>
    <property type="project" value="MGI"/>
</dbReference>
<dbReference type="GO" id="GO:0007369">
    <property type="term" value="P:gastrulation"/>
    <property type="evidence" value="ECO:0000316"/>
    <property type="project" value="MGI"/>
</dbReference>
<dbReference type="GO" id="GO:0007507">
    <property type="term" value="P:heart development"/>
    <property type="evidence" value="ECO:0000314"/>
    <property type="project" value="UniProtKB"/>
</dbReference>
<dbReference type="GO" id="GO:0001701">
    <property type="term" value="P:in utero embryonic development"/>
    <property type="evidence" value="ECO:0000315"/>
    <property type="project" value="MGI"/>
</dbReference>
<dbReference type="GO" id="GO:0001763">
    <property type="term" value="P:morphogenesis of a branching structure"/>
    <property type="evidence" value="ECO:0000314"/>
    <property type="project" value="UniProtKB"/>
</dbReference>
<dbReference type="GO" id="GO:0030512">
    <property type="term" value="P:negative regulation of transforming growth factor beta receptor signaling pathway"/>
    <property type="evidence" value="ECO:0000316"/>
    <property type="project" value="MGI"/>
</dbReference>
<dbReference type="GO" id="GO:0038092">
    <property type="term" value="P:nodal signaling pathway"/>
    <property type="evidence" value="ECO:0000315"/>
    <property type="project" value="UniProtKB"/>
</dbReference>
<dbReference type="GO" id="GO:0030335">
    <property type="term" value="P:positive regulation of cell migration"/>
    <property type="evidence" value="ECO:0000314"/>
    <property type="project" value="UniProtKB"/>
</dbReference>
<dbReference type="GO" id="GO:0008284">
    <property type="term" value="P:positive regulation of cell population proliferation"/>
    <property type="evidence" value="ECO:0000266"/>
    <property type="project" value="MGI"/>
</dbReference>
<dbReference type="GO" id="GO:0001954">
    <property type="term" value="P:positive regulation of cell-matrix adhesion"/>
    <property type="evidence" value="ECO:0000315"/>
    <property type="project" value="MGI"/>
</dbReference>
<dbReference type="GO" id="GO:0048146">
    <property type="term" value="P:positive regulation of fibroblast proliferation"/>
    <property type="evidence" value="ECO:0000315"/>
    <property type="project" value="MGI"/>
</dbReference>
<dbReference type="GO" id="GO:0045944">
    <property type="term" value="P:positive regulation of transcription by RNA polymerase II"/>
    <property type="evidence" value="ECO:0000316"/>
    <property type="project" value="MGI"/>
</dbReference>
<dbReference type="GO" id="GO:0010762">
    <property type="term" value="P:regulation of fibroblast migration"/>
    <property type="evidence" value="ECO:0000315"/>
    <property type="project" value="MGI"/>
</dbReference>
<dbReference type="GO" id="GO:0009966">
    <property type="term" value="P:regulation of signal transduction"/>
    <property type="evidence" value="ECO:0000314"/>
    <property type="project" value="MGI"/>
</dbReference>
<dbReference type="GO" id="GO:0001570">
    <property type="term" value="P:vasculogenesis"/>
    <property type="evidence" value="ECO:0000315"/>
    <property type="project" value="MGI"/>
</dbReference>
<dbReference type="CDD" id="cd00054">
    <property type="entry name" value="EGF_CA"/>
    <property type="match status" value="1"/>
</dbReference>
<dbReference type="FunFam" id="2.10.25.10:FF:000421">
    <property type="entry name" value="Teratocarcinoma-derived growth factor"/>
    <property type="match status" value="1"/>
</dbReference>
<dbReference type="Gene3D" id="2.10.25.10">
    <property type="entry name" value="Laminin"/>
    <property type="match status" value="1"/>
</dbReference>
<dbReference type="InterPro" id="IPR017047">
    <property type="entry name" value="Cripto_growth_factor"/>
</dbReference>
<dbReference type="InterPro" id="IPR019011">
    <property type="entry name" value="Cryptic/Cripto_CFC-dom"/>
</dbReference>
<dbReference type="InterPro" id="IPR000742">
    <property type="entry name" value="EGF-like_dom"/>
</dbReference>
<dbReference type="Pfam" id="PF09443">
    <property type="entry name" value="CFC"/>
    <property type="match status" value="1"/>
</dbReference>
<dbReference type="PIRSF" id="PIRSF036301">
    <property type="entry name" value="Cripto_growth_factor"/>
    <property type="match status" value="1"/>
</dbReference>
<dbReference type="SUPFAM" id="SSF57196">
    <property type="entry name" value="EGF/Laminin"/>
    <property type="match status" value="2"/>
</dbReference>
<dbReference type="PROSITE" id="PS00022">
    <property type="entry name" value="EGF_1"/>
    <property type="match status" value="1"/>
</dbReference>
<dbReference type="PROSITE" id="PS50026">
    <property type="entry name" value="EGF_3"/>
    <property type="match status" value="1"/>
</dbReference>
<name>TDGF1_MOUSE</name>
<sequence length="171" mass="18655">MGYFSSSVVLLVAISSAFEFGPVAGRDLAIRDNSIWDQKEPAVRDRSFQFVPSVGIQNSKSLNKTCCLNGGTCILGSFCACPPSFYGRNCEHDVRKEHCGSILHGTWLPKKCSLCRCWHGQLHCLPQTFLPGCDGHVMDQDLKASGTPCQTPSVTTTFMLAGACLFLDMKV</sequence>